<organism>
    <name type="scientific">Salmonella arizonae (strain ATCC BAA-731 / CDC346-86 / RSK2980)</name>
    <dbReference type="NCBI Taxonomy" id="41514"/>
    <lineage>
        <taxon>Bacteria</taxon>
        <taxon>Pseudomonadati</taxon>
        <taxon>Pseudomonadota</taxon>
        <taxon>Gammaproteobacteria</taxon>
        <taxon>Enterobacterales</taxon>
        <taxon>Enterobacteriaceae</taxon>
        <taxon>Salmonella</taxon>
    </lineage>
</organism>
<evidence type="ECO:0000255" key="1">
    <source>
        <dbReference type="HAMAP-Rule" id="MF_00390"/>
    </source>
</evidence>
<accession>A9MN34</accession>
<protein>
    <recommendedName>
        <fullName evidence="1">Sulfurtransferase TusD</fullName>
        <ecNumber evidence="1">2.8.1.-</ecNumber>
    </recommendedName>
    <alternativeName>
        <fullName evidence="1">tRNA 2-thiouridine synthesizing protein D</fullName>
    </alternativeName>
</protein>
<comment type="function">
    <text evidence="1">Part of a sulfur-relay system required for 2-thiolation of 5-methylaminomethyl-2-thiouridine (mnm(5)s(2)U) at tRNA wobble positions. Accepts sulfur from TusA and transfers it in turn to TusE.</text>
</comment>
<comment type="subunit">
    <text evidence="1">Heterohexamer, formed by a dimer of trimers. The hexameric TusBCD complex contains 2 copies each of TusB, TusC and TusD. The TusBCD complex interacts with TusE.</text>
</comment>
<comment type="subcellular location">
    <subcellularLocation>
        <location evidence="1">Cytoplasm</location>
    </subcellularLocation>
</comment>
<comment type="similarity">
    <text evidence="1">Belongs to the DsrE/TusD family.</text>
</comment>
<sequence>MRYAIMVTGPAYGAQQASSALQFAHALLNEGHELISVFFYREGVYNANLLTSPAGDEYDLVRAWQKLNTQHGVALNICVAAALRRGIIDDTEADRLGLPSANLQPGFTLSGLGALAEASLTCDRVVQF</sequence>
<gene>
    <name evidence="1" type="primary">tusD</name>
    <name type="ordered locus">SARI_04175</name>
</gene>
<keyword id="KW-0963">Cytoplasm</keyword>
<keyword id="KW-1185">Reference proteome</keyword>
<keyword id="KW-0808">Transferase</keyword>
<keyword id="KW-0819">tRNA processing</keyword>
<feature type="chain" id="PRO_1000080235" description="Sulfurtransferase TusD">
    <location>
        <begin position="1"/>
        <end position="128"/>
    </location>
</feature>
<feature type="active site" description="Cysteine persulfide intermediate" evidence="1">
    <location>
        <position position="78"/>
    </location>
</feature>
<dbReference type="EC" id="2.8.1.-" evidence="1"/>
<dbReference type="EMBL" id="CP000880">
    <property type="protein sequence ID" value="ABX23964.1"/>
    <property type="molecule type" value="Genomic_DNA"/>
</dbReference>
<dbReference type="SMR" id="A9MN34"/>
<dbReference type="STRING" id="41514.SARI_04175"/>
<dbReference type="KEGG" id="ses:SARI_04175"/>
<dbReference type="HOGENOM" id="CLU_132095_0_0_6"/>
<dbReference type="Proteomes" id="UP000002084">
    <property type="component" value="Chromosome"/>
</dbReference>
<dbReference type="GO" id="GO:1990228">
    <property type="term" value="C:sulfurtransferase complex"/>
    <property type="evidence" value="ECO:0007669"/>
    <property type="project" value="TreeGrafter"/>
</dbReference>
<dbReference type="GO" id="GO:0097163">
    <property type="term" value="F:sulfur carrier activity"/>
    <property type="evidence" value="ECO:0007669"/>
    <property type="project" value="TreeGrafter"/>
</dbReference>
<dbReference type="GO" id="GO:0016783">
    <property type="term" value="F:sulfurtransferase activity"/>
    <property type="evidence" value="ECO:0007669"/>
    <property type="project" value="UniProtKB-UniRule"/>
</dbReference>
<dbReference type="GO" id="GO:0002143">
    <property type="term" value="P:tRNA wobble position uridine thiolation"/>
    <property type="evidence" value="ECO:0007669"/>
    <property type="project" value="TreeGrafter"/>
</dbReference>
<dbReference type="FunFam" id="3.40.1260.10:FF:000001">
    <property type="entry name" value="Sulfurtransferase TusD"/>
    <property type="match status" value="1"/>
</dbReference>
<dbReference type="Gene3D" id="3.40.1260.10">
    <property type="entry name" value="DsrEFH-like"/>
    <property type="match status" value="1"/>
</dbReference>
<dbReference type="HAMAP" id="MF_00390">
    <property type="entry name" value="Thiourid_synth_D"/>
    <property type="match status" value="1"/>
</dbReference>
<dbReference type="InterPro" id="IPR027396">
    <property type="entry name" value="DsrEFH-like"/>
</dbReference>
<dbReference type="InterPro" id="IPR003787">
    <property type="entry name" value="Sulphur_relay_DsrE/F-like"/>
</dbReference>
<dbReference type="InterPro" id="IPR017463">
    <property type="entry name" value="Sulphur_relay_TusD/DsrE"/>
</dbReference>
<dbReference type="NCBIfam" id="NF001237">
    <property type="entry name" value="PRK00207.1"/>
    <property type="match status" value="1"/>
</dbReference>
<dbReference type="NCBIfam" id="TIGR03012">
    <property type="entry name" value="sulf_tusD_dsrE"/>
    <property type="match status" value="1"/>
</dbReference>
<dbReference type="PANTHER" id="PTHR34874">
    <property type="entry name" value="PROTEIN YCHN"/>
    <property type="match status" value="1"/>
</dbReference>
<dbReference type="PANTHER" id="PTHR34874:SF3">
    <property type="entry name" value="SULFURTRANSFERASE TUSD"/>
    <property type="match status" value="1"/>
</dbReference>
<dbReference type="Pfam" id="PF02635">
    <property type="entry name" value="DsrE"/>
    <property type="match status" value="1"/>
</dbReference>
<dbReference type="SUPFAM" id="SSF75169">
    <property type="entry name" value="DsrEFH-like"/>
    <property type="match status" value="1"/>
</dbReference>
<name>TUSD_SALAR</name>
<proteinExistence type="inferred from homology"/>
<reference key="1">
    <citation type="submission" date="2007-11" db="EMBL/GenBank/DDBJ databases">
        <authorList>
            <consortium name="The Salmonella enterica serovar Arizonae Genome Sequencing Project"/>
            <person name="McClelland M."/>
            <person name="Sanderson E.K."/>
            <person name="Porwollik S."/>
            <person name="Spieth J."/>
            <person name="Clifton W.S."/>
            <person name="Fulton R."/>
            <person name="Chunyan W."/>
            <person name="Wollam A."/>
            <person name="Shah N."/>
            <person name="Pepin K."/>
            <person name="Bhonagiri V."/>
            <person name="Nash W."/>
            <person name="Johnson M."/>
            <person name="Thiruvilangam P."/>
            <person name="Wilson R."/>
        </authorList>
    </citation>
    <scope>NUCLEOTIDE SEQUENCE [LARGE SCALE GENOMIC DNA]</scope>
    <source>
        <strain>ATCC BAA-731 / CDC346-86 / RSK2980</strain>
    </source>
</reference>